<proteinExistence type="inferred from homology"/>
<name>RPIA_BAUCH</name>
<dbReference type="EC" id="5.3.1.6" evidence="1"/>
<dbReference type="EMBL" id="CP000238">
    <property type="protein sequence ID" value="ABF14024.1"/>
    <property type="molecule type" value="Genomic_DNA"/>
</dbReference>
<dbReference type="RefSeq" id="WP_011520803.1">
    <property type="nucleotide sequence ID" value="NC_007984.1"/>
</dbReference>
<dbReference type="SMR" id="Q1LSJ4"/>
<dbReference type="STRING" id="374463.BCI_0647"/>
<dbReference type="KEGG" id="bci:BCI_0647"/>
<dbReference type="HOGENOM" id="CLU_056590_1_1_6"/>
<dbReference type="OrthoDB" id="5870696at2"/>
<dbReference type="UniPathway" id="UPA00115">
    <property type="reaction ID" value="UER00412"/>
</dbReference>
<dbReference type="Proteomes" id="UP000002427">
    <property type="component" value="Chromosome"/>
</dbReference>
<dbReference type="GO" id="GO:0005829">
    <property type="term" value="C:cytosol"/>
    <property type="evidence" value="ECO:0007669"/>
    <property type="project" value="TreeGrafter"/>
</dbReference>
<dbReference type="GO" id="GO:0004751">
    <property type="term" value="F:ribose-5-phosphate isomerase activity"/>
    <property type="evidence" value="ECO:0007669"/>
    <property type="project" value="UniProtKB-UniRule"/>
</dbReference>
<dbReference type="GO" id="GO:0006014">
    <property type="term" value="P:D-ribose metabolic process"/>
    <property type="evidence" value="ECO:0007669"/>
    <property type="project" value="TreeGrafter"/>
</dbReference>
<dbReference type="GO" id="GO:0009052">
    <property type="term" value="P:pentose-phosphate shunt, non-oxidative branch"/>
    <property type="evidence" value="ECO:0007669"/>
    <property type="project" value="UniProtKB-UniRule"/>
</dbReference>
<dbReference type="CDD" id="cd01398">
    <property type="entry name" value="RPI_A"/>
    <property type="match status" value="1"/>
</dbReference>
<dbReference type="FunFam" id="3.30.70.260:FF:000004">
    <property type="entry name" value="Ribose-5-phosphate isomerase A"/>
    <property type="match status" value="1"/>
</dbReference>
<dbReference type="FunFam" id="3.40.50.1360:FF:000001">
    <property type="entry name" value="Ribose-5-phosphate isomerase A"/>
    <property type="match status" value="1"/>
</dbReference>
<dbReference type="Gene3D" id="3.30.70.260">
    <property type="match status" value="1"/>
</dbReference>
<dbReference type="Gene3D" id="3.40.50.1360">
    <property type="match status" value="1"/>
</dbReference>
<dbReference type="HAMAP" id="MF_00170">
    <property type="entry name" value="Rib_5P_isom_A"/>
    <property type="match status" value="1"/>
</dbReference>
<dbReference type="InterPro" id="IPR037171">
    <property type="entry name" value="NagB/RpiA_transferase-like"/>
</dbReference>
<dbReference type="InterPro" id="IPR020672">
    <property type="entry name" value="Ribose5P_isomerase_typA_subgr"/>
</dbReference>
<dbReference type="InterPro" id="IPR004788">
    <property type="entry name" value="Ribose5P_isomerase_type_A"/>
</dbReference>
<dbReference type="NCBIfam" id="NF001924">
    <property type="entry name" value="PRK00702.1"/>
    <property type="match status" value="1"/>
</dbReference>
<dbReference type="NCBIfam" id="TIGR00021">
    <property type="entry name" value="rpiA"/>
    <property type="match status" value="1"/>
</dbReference>
<dbReference type="PANTHER" id="PTHR11934">
    <property type="entry name" value="RIBOSE-5-PHOSPHATE ISOMERASE"/>
    <property type="match status" value="1"/>
</dbReference>
<dbReference type="PANTHER" id="PTHR11934:SF0">
    <property type="entry name" value="RIBOSE-5-PHOSPHATE ISOMERASE"/>
    <property type="match status" value="1"/>
</dbReference>
<dbReference type="Pfam" id="PF06026">
    <property type="entry name" value="Rib_5-P_isom_A"/>
    <property type="match status" value="1"/>
</dbReference>
<dbReference type="SUPFAM" id="SSF75445">
    <property type="entry name" value="D-ribose-5-phosphate isomerase (RpiA), lid domain"/>
    <property type="match status" value="1"/>
</dbReference>
<dbReference type="SUPFAM" id="SSF100950">
    <property type="entry name" value="NagB/RpiA/CoA transferase-like"/>
    <property type="match status" value="1"/>
</dbReference>
<accession>Q1LSJ4</accession>
<protein>
    <recommendedName>
        <fullName evidence="1">Ribose-5-phosphate isomerase A</fullName>
        <ecNumber evidence="1">5.3.1.6</ecNumber>
    </recommendedName>
    <alternativeName>
        <fullName evidence="1">Phosphoriboisomerase A</fullName>
        <shortName evidence="1">PRI</shortName>
    </alternativeName>
</protein>
<evidence type="ECO:0000255" key="1">
    <source>
        <dbReference type="HAMAP-Rule" id="MF_00170"/>
    </source>
</evidence>
<comment type="function">
    <text evidence="1">Catalyzes the reversible conversion of ribose-5-phosphate to ribulose 5-phosphate.</text>
</comment>
<comment type="catalytic activity">
    <reaction evidence="1">
        <text>aldehydo-D-ribose 5-phosphate = D-ribulose 5-phosphate</text>
        <dbReference type="Rhea" id="RHEA:14657"/>
        <dbReference type="ChEBI" id="CHEBI:58121"/>
        <dbReference type="ChEBI" id="CHEBI:58273"/>
        <dbReference type="EC" id="5.3.1.6"/>
    </reaction>
</comment>
<comment type="pathway">
    <text evidence="1">Carbohydrate degradation; pentose phosphate pathway; D-ribose 5-phosphate from D-ribulose 5-phosphate (non-oxidative stage): step 1/1.</text>
</comment>
<comment type="subunit">
    <text evidence="1">Homodimer.</text>
</comment>
<comment type="similarity">
    <text evidence="1">Belongs to the ribose 5-phosphate isomerase family.</text>
</comment>
<organism>
    <name type="scientific">Baumannia cicadellinicola subsp. Homalodisca coagulata</name>
    <dbReference type="NCBI Taxonomy" id="374463"/>
    <lineage>
        <taxon>Bacteria</taxon>
        <taxon>Pseudomonadati</taxon>
        <taxon>Pseudomonadota</taxon>
        <taxon>Gammaproteobacteria</taxon>
        <taxon>Candidatus Palibaumannia</taxon>
    </lineage>
</organism>
<gene>
    <name evidence="1" type="primary">rpiA</name>
    <name type="ordered locus">BCI_0647</name>
</gene>
<feature type="chain" id="PRO_1000016903" description="Ribose-5-phosphate isomerase A">
    <location>
        <begin position="1"/>
        <end position="223"/>
    </location>
</feature>
<feature type="active site" description="Proton acceptor" evidence="1">
    <location>
        <position position="103"/>
    </location>
</feature>
<feature type="binding site" evidence="1">
    <location>
        <begin position="28"/>
        <end position="31"/>
    </location>
    <ligand>
        <name>substrate</name>
    </ligand>
</feature>
<feature type="binding site" evidence="1">
    <location>
        <begin position="81"/>
        <end position="84"/>
    </location>
    <ligand>
        <name>substrate</name>
    </ligand>
</feature>
<feature type="binding site" evidence="1">
    <location>
        <begin position="94"/>
        <end position="97"/>
    </location>
    <ligand>
        <name>substrate</name>
    </ligand>
</feature>
<feature type="binding site" evidence="1">
    <location>
        <position position="121"/>
    </location>
    <ligand>
        <name>substrate</name>
    </ligand>
</feature>
<reference key="1">
    <citation type="journal article" date="2006" name="PLoS Biol.">
        <title>Metabolic complementarity and genomics of the dual bacterial symbiosis of sharpshooters.</title>
        <authorList>
            <person name="Wu D."/>
            <person name="Daugherty S.C."/>
            <person name="Van Aken S.E."/>
            <person name="Pai G.H."/>
            <person name="Watkins K.L."/>
            <person name="Khouri H."/>
            <person name="Tallon L.J."/>
            <person name="Zaborsky J.M."/>
            <person name="Dunbar H.E."/>
            <person name="Tran P.L."/>
            <person name="Moran N.A."/>
            <person name="Eisen J.A."/>
        </authorList>
    </citation>
    <scope>NUCLEOTIDE SEQUENCE [LARGE SCALE GENOMIC DNA]</scope>
</reference>
<sequence length="223" mass="23903">MMHEKLKKAVGWAALEYVSSGMIIGVGTGSTTDHFIDALGTVKHKIEGVVSSSEQSTTKLKSMGILLFNLNDVDGLDIYVDGTDEINSNMQMIKGGGAALTREKVLAAAANKFICIADTSKQVDILGNFPLPIEVIPMAHAWVARELVHLTGGLPKYRQGVITDNGNIILDIYNLKILDAIALEKIINNIPGVVTVGLFANRCADIALISSDLGIEEISRSIK</sequence>
<keyword id="KW-0413">Isomerase</keyword>
<keyword id="KW-1185">Reference proteome</keyword>